<keyword id="KW-0067">ATP-binding</keyword>
<keyword id="KW-1261">Bacterial host gene expression shutoff by virus</keyword>
<keyword id="KW-0175">Coiled coil</keyword>
<keyword id="KW-1247">Degradation of host chromosome by virus</keyword>
<keyword id="KW-0235">DNA replication</keyword>
<keyword id="KW-0244">Early protein</keyword>
<keyword id="KW-0269">Exonuclease</keyword>
<keyword id="KW-1190">Host gene expression shutoff by virus</keyword>
<keyword id="KW-0945">Host-virus interaction</keyword>
<keyword id="KW-0378">Hydrolase</keyword>
<keyword id="KW-0540">Nuclease</keyword>
<keyword id="KW-0547">Nucleotide-binding</keyword>
<keyword id="KW-1185">Reference proteome</keyword>
<keyword id="KW-1194">Viral DNA replication</keyword>
<sequence>MSKITIKTLKFSNVMSYGKDIVIHFDKNPVTQLIGGNGLGKSTIATVIEELFYNKNSRGIKKDALFSWNAPKKEYDMHAYFSKDEDEYELHKVVKSTAKVTLIKNGEDISGHTATQTYKMIEEIMGGDFQTFTKLIYQSVGSNLDFLKATDATRKAFLVNLFNQEQYKEMSETIKADRKEIANTLNNLQGQMAVITKILNGKNNLGTLQEPVEVPEFDEEPLAQELTESKIKAALAKSQEANITKLRNLDKAVQVAEQSFEPFKNLPAPTDQNEEISSVTRDLTIVTSRASEVKKRYQKFKQEASNTECPTCGTHLNTTAAQKAMDMARVEYDPLFKEKQSLEAKLEQLKKEQLEYVAYTRAKDALDKAVVARDEFKNSMSDASFEELNVQILQVQIRQLEQEIADGRSKVAIAKEHNATVELANAKYKAKLEQIEKAEAEMTEITSKLDGVSEAVADLDILIAALKNLVGYKLEHSVKVFEELINKYLSIMTGGKFALGFELDETKLQVVIFNDGNRTSMENCSTGQQSRINLATLLAIRMLLTSISKVNINLLFLDEVISFIDTKGLDTLVELLNEEESLNSIIVSHGHTHPLAHKITVKKDAEGFSYLE</sequence>
<accession>P11109</accession>
<accession>Q5DMH5</accession>
<accession>Q66LT7</accession>
<protein>
    <recommendedName>
        <fullName evidence="3">Probable exonuclease subunit 2</fullName>
        <ecNumber evidence="3">3.1.11.-</ecNumber>
    </recommendedName>
    <alternativeName>
        <fullName>D13</fullName>
    </alternativeName>
</protein>
<proteinExistence type="evidence at transcript level"/>
<feature type="chain" id="PRO_0000164939" description="Probable exonuclease subunit 2">
    <location>
        <begin position="1"/>
        <end position="612"/>
    </location>
</feature>
<feature type="coiled-coil region" evidence="2">
    <location>
        <begin position="163"/>
        <end position="193"/>
    </location>
</feature>
<feature type="coiled-coil region" evidence="2">
    <location>
        <begin position="288"/>
        <end position="459"/>
    </location>
</feature>
<feature type="binding site" evidence="2">
    <location>
        <begin position="35"/>
        <end position="42"/>
    </location>
    <ligand>
        <name>ATP</name>
        <dbReference type="ChEBI" id="CHEBI:30616"/>
    </ligand>
</feature>
<feature type="sequence conflict" description="In Ref. 3; AAX12056 and 4; AAU05265." evidence="3" ref="3 4">
    <original>N</original>
    <variation>D</variation>
    <location>
        <position position="317"/>
    </location>
</feature>
<evidence type="ECO:0000250" key="1">
    <source>
        <dbReference type="UniProtKB" id="P04522"/>
    </source>
</evidence>
<evidence type="ECO:0000255" key="2"/>
<evidence type="ECO:0000305" key="3"/>
<evidence type="ECO:0000305" key="4">
    <source>
    </source>
</evidence>
<evidence type="ECO:0000305" key="5">
    <source>
    </source>
</evidence>
<evidence type="ECO:0000312" key="6">
    <source>
        <dbReference type="EMBL" id="AAS77174.1"/>
    </source>
</evidence>
<evidence type="ECO:0000312" key="7">
    <source>
        <dbReference type="EMBL" id="AAU05265.1"/>
    </source>
</evidence>
<evidence type="ECO:0000312" key="8">
    <source>
        <dbReference type="EMBL" id="AAX12056.1"/>
    </source>
</evidence>
<comment type="function">
    <text evidence="1 5">Possible exonuclease that may play a role in viral genome replication, DNA recombination, and host DNA degradation.</text>
</comment>
<comment type="subunit">
    <text evidence="1">Could consist of two subunits: D13 and D12.</text>
</comment>
<comment type="induction">
    <text evidence="4">Expressed in the early phase of the viral replicative cycle.</text>
</comment>
<comment type="similarity">
    <text evidence="3">To phage T4 protein GP46.</text>
</comment>
<comment type="sequence caution" evidence="3">
    <conflict type="erroneous initiation">
        <sequence resource="EMBL-CDS" id="AAX12056"/>
    </conflict>
    <text>Extended N-terminus.</text>
</comment>
<dbReference type="EC" id="3.1.11.-" evidence="3"/>
<dbReference type="EMBL" id="AY543070">
    <property type="protein sequence ID" value="AAS77174.1"/>
    <property type="molecule type" value="Genomic_DNA"/>
</dbReference>
<dbReference type="EMBL" id="AY692264">
    <property type="protein sequence ID" value="AAU05265.1"/>
    <property type="molecule type" value="Genomic_DNA"/>
</dbReference>
<dbReference type="EMBL" id="AY587007">
    <property type="protein sequence ID" value="AAX12056.1"/>
    <property type="status" value="ALT_INIT"/>
    <property type="molecule type" value="Genomic_DNA"/>
</dbReference>
<dbReference type="PIR" id="S01933">
    <property type="entry name" value="WDBPT5"/>
</dbReference>
<dbReference type="RefSeq" id="YP_006956.1">
    <property type="nucleotide sequence ID" value="NC_005859.1"/>
</dbReference>
<dbReference type="GeneID" id="2777609"/>
<dbReference type="KEGG" id="vg:2777609"/>
<dbReference type="Proteomes" id="UP000002107">
    <property type="component" value="Genome"/>
</dbReference>
<dbReference type="Proteomes" id="UP000002141">
    <property type="component" value="Segment"/>
</dbReference>
<dbReference type="Proteomes" id="UP000002503">
    <property type="component" value="Segment"/>
</dbReference>
<dbReference type="GO" id="GO:0005524">
    <property type="term" value="F:ATP binding"/>
    <property type="evidence" value="ECO:0007669"/>
    <property type="project" value="UniProtKB-KW"/>
</dbReference>
<dbReference type="GO" id="GO:0016887">
    <property type="term" value="F:ATP hydrolysis activity"/>
    <property type="evidence" value="ECO:0007669"/>
    <property type="project" value="InterPro"/>
</dbReference>
<dbReference type="GO" id="GO:0004527">
    <property type="term" value="F:exonuclease activity"/>
    <property type="evidence" value="ECO:0007669"/>
    <property type="project" value="UniProtKB-KW"/>
</dbReference>
<dbReference type="GO" id="GO:0099015">
    <property type="term" value="P:degradation of host chromosome by virus"/>
    <property type="evidence" value="ECO:0007669"/>
    <property type="project" value="UniProtKB-KW"/>
</dbReference>
<dbReference type="GO" id="GO:0006260">
    <property type="term" value="P:DNA replication"/>
    <property type="evidence" value="ECO:0007669"/>
    <property type="project" value="UniProtKB-KW"/>
</dbReference>
<dbReference type="GO" id="GO:0006302">
    <property type="term" value="P:double-strand break repair"/>
    <property type="evidence" value="ECO:0007669"/>
    <property type="project" value="InterPro"/>
</dbReference>
<dbReference type="GO" id="GO:0039657">
    <property type="term" value="P:symbiont-mediated suppression of host gene expression"/>
    <property type="evidence" value="ECO:0007669"/>
    <property type="project" value="UniProtKB-KW"/>
</dbReference>
<dbReference type="Gene3D" id="1.10.287.510">
    <property type="entry name" value="Helix hairpin bin"/>
    <property type="match status" value="1"/>
</dbReference>
<dbReference type="Gene3D" id="3.40.50.300">
    <property type="entry name" value="P-loop containing nucleotide triphosphate hydrolases"/>
    <property type="match status" value="2"/>
</dbReference>
<dbReference type="InterPro" id="IPR027417">
    <property type="entry name" value="P-loop_NTPase"/>
</dbReference>
<dbReference type="InterPro" id="IPR038729">
    <property type="entry name" value="Rad50/SbcC_AAA"/>
</dbReference>
<dbReference type="PANTHER" id="PTHR32114">
    <property type="entry name" value="ABC TRANSPORTER ABCH.3"/>
    <property type="match status" value="1"/>
</dbReference>
<dbReference type="PANTHER" id="PTHR32114:SF2">
    <property type="entry name" value="ABC TRANSPORTER ABCH.3"/>
    <property type="match status" value="1"/>
</dbReference>
<dbReference type="Pfam" id="PF13476">
    <property type="entry name" value="AAA_23"/>
    <property type="match status" value="1"/>
</dbReference>
<dbReference type="SUPFAM" id="SSF52540">
    <property type="entry name" value="P-loop containing nucleoside triphosphate hydrolases"/>
    <property type="match status" value="1"/>
</dbReference>
<dbReference type="SUPFAM" id="SSF75712">
    <property type="entry name" value="Rad50 coiled-coil Zn hook"/>
    <property type="match status" value="1"/>
</dbReference>
<organism>
    <name type="scientific">Escherichia phage T5</name>
    <name type="common">Enterobacteria phage T5</name>
    <dbReference type="NCBI Taxonomy" id="2695836"/>
    <lineage>
        <taxon>Viruses</taxon>
        <taxon>Duplodnaviria</taxon>
        <taxon>Heunggongvirae</taxon>
        <taxon>Uroviricota</taxon>
        <taxon>Caudoviricetes</taxon>
        <taxon>Demerecviridae</taxon>
        <taxon>Markadamsvirinae</taxon>
        <taxon>Tequintavirus</taxon>
        <taxon>Tequintavirus T5</taxon>
    </lineage>
</organism>
<reference key="1">
    <citation type="journal article" date="1988" name="Nucleic Acids Res.">
        <title>The nucleotide sequence of the region of bacteriophage T5 early genes D10-D15.</title>
        <authorList>
            <person name="Kaliman A.V."/>
            <person name="Kryukov V.M."/>
            <person name="Bayev A.A."/>
        </authorList>
    </citation>
    <scope>NUCLEOTIDE SEQUENCE [GENOMIC DNA]</scope>
</reference>
<reference key="2">
    <citation type="submission" date="2004-01" db="EMBL/GenBank/DDBJ databases">
        <title>Bacteriophage T5 complete genome.</title>
        <authorList>
            <person name="Ksenzenko V.N."/>
            <person name="Kaliman A.V."/>
            <person name="Krutilina A.I."/>
            <person name="Shlyapnikov M.G."/>
        </authorList>
    </citation>
    <scope>NUCLEOTIDE SEQUENCE [LARGE SCALE GENOMIC DNA]</scope>
</reference>
<reference key="3">
    <citation type="journal article" date="2005" name="Virology">
        <title>Complete genome sequence of bacteriophage T5.</title>
        <authorList>
            <person name="Wang J."/>
            <person name="Jiang Y."/>
            <person name="Vincent M."/>
            <person name="Sun Y."/>
            <person name="Yu H."/>
            <person name="Wang J."/>
            <person name="Bao Q."/>
            <person name="Kong H."/>
            <person name="Hu S."/>
        </authorList>
    </citation>
    <scope>NUCLEOTIDE SEQUENCE [LARGE SCALE GENOMIC DNA]</scope>
    <scope>INDUCTION</scope>
    <source>
        <strain evidence="8">ATCC 11303-B5</strain>
    </source>
</reference>
<reference key="4">
    <citation type="journal article" date="2014" name="J. Virol.">
        <title>Insights into bacteriophage T5 structure from analysis of its morphogenesis genes and protein components.</title>
        <authorList>
            <person name="Zivanovic Y."/>
            <person name="Confalonieri F."/>
            <person name="Ponchon L."/>
            <person name="Lurz R."/>
            <person name="Chami M."/>
            <person name="Flayhan A."/>
            <person name="Renouard M."/>
            <person name="Huet A."/>
            <person name="Decottignies P."/>
            <person name="Davidson A.R."/>
            <person name="Breyton C."/>
            <person name="Boulanger P."/>
        </authorList>
    </citation>
    <scope>NUCLEOTIDE SEQUENCE [LARGE SCALE GENOMIC DNA]</scope>
    <source>
        <strain>St0 deletion mutant</strain>
    </source>
</reference>
<reference key="5">
    <citation type="journal article" date="1989" name="FEBS Lett.">
        <title>Two early genes of bacteriophage T5 encode proteins containing an NTP-binding sequence motif and probably involved in DNA replication, recombination and repair.</title>
        <authorList>
            <person name="Blinov V.M."/>
            <person name="Koonin E.V."/>
            <person name="Gorbalenya A.E."/>
            <person name="Kaliman A.V."/>
            <person name="Kryukov V.M."/>
        </authorList>
    </citation>
    <scope>POSSIBLE FUNCTION</scope>
</reference>
<gene>
    <name type="primary">D13</name>
    <name evidence="6" type="ORF">T5.128</name>
    <name evidence="7" type="ORF">T5p126</name>
</gene>
<organismHost>
    <name type="scientific">Escherichia coli</name>
    <dbReference type="NCBI Taxonomy" id="562"/>
</organismHost>
<name>EXO2_BPT5</name>